<organism>
    <name type="scientific">Mus musculus</name>
    <name type="common">Mouse</name>
    <dbReference type="NCBI Taxonomy" id="10090"/>
    <lineage>
        <taxon>Eukaryota</taxon>
        <taxon>Metazoa</taxon>
        <taxon>Chordata</taxon>
        <taxon>Craniata</taxon>
        <taxon>Vertebrata</taxon>
        <taxon>Euteleostomi</taxon>
        <taxon>Mammalia</taxon>
        <taxon>Eutheria</taxon>
        <taxon>Euarchontoglires</taxon>
        <taxon>Glires</taxon>
        <taxon>Rodentia</taxon>
        <taxon>Myomorpha</taxon>
        <taxon>Muroidea</taxon>
        <taxon>Muridae</taxon>
        <taxon>Murinae</taxon>
        <taxon>Mus</taxon>
        <taxon>Mus</taxon>
    </lineage>
</organism>
<sequence>MTTLRAFTCDDLFRFNNINLDPLTETYGIPFYLQYLAHWPEYFIVAEAPGGELMGYIMGKAEGSVAREEWHGHVTALSVAPEFRRLGLAAKLMELLEEISERKGGFFVDLFVRVSNQVAVNMYKQLGYSVYRTVIEYYSASNGEPDEDAYDMRKALSRDTEKKSIIPLPHPVRPEDIE</sequence>
<evidence type="ECO:0000250" key="1">
    <source>
        <dbReference type="UniProtKB" id="P61599"/>
    </source>
</evidence>
<evidence type="ECO:0000255" key="2">
    <source>
        <dbReference type="PROSITE-ProRule" id="PRU00532"/>
    </source>
</evidence>
<evidence type="ECO:0000305" key="3"/>
<feature type="chain" id="PRO_0000074535" description="N-alpha-acetyltransferase 20">
    <location>
        <begin position="1"/>
        <end position="178"/>
    </location>
</feature>
<feature type="domain" description="N-acetyltransferase" evidence="2">
    <location>
        <begin position="2"/>
        <end position="157"/>
    </location>
</feature>
<reference key="1">
    <citation type="journal article" date="2005" name="Science">
        <title>The transcriptional landscape of the mammalian genome.</title>
        <authorList>
            <person name="Carninci P."/>
            <person name="Kasukawa T."/>
            <person name="Katayama S."/>
            <person name="Gough J."/>
            <person name="Frith M.C."/>
            <person name="Maeda N."/>
            <person name="Oyama R."/>
            <person name="Ravasi T."/>
            <person name="Lenhard B."/>
            <person name="Wells C."/>
            <person name="Kodzius R."/>
            <person name="Shimokawa K."/>
            <person name="Bajic V.B."/>
            <person name="Brenner S.E."/>
            <person name="Batalov S."/>
            <person name="Forrest A.R."/>
            <person name="Zavolan M."/>
            <person name="Davis M.J."/>
            <person name="Wilming L.G."/>
            <person name="Aidinis V."/>
            <person name="Allen J.E."/>
            <person name="Ambesi-Impiombato A."/>
            <person name="Apweiler R."/>
            <person name="Aturaliya R.N."/>
            <person name="Bailey T.L."/>
            <person name="Bansal M."/>
            <person name="Baxter L."/>
            <person name="Beisel K.W."/>
            <person name="Bersano T."/>
            <person name="Bono H."/>
            <person name="Chalk A.M."/>
            <person name="Chiu K.P."/>
            <person name="Choudhary V."/>
            <person name="Christoffels A."/>
            <person name="Clutterbuck D.R."/>
            <person name="Crowe M.L."/>
            <person name="Dalla E."/>
            <person name="Dalrymple B.P."/>
            <person name="de Bono B."/>
            <person name="Della Gatta G."/>
            <person name="di Bernardo D."/>
            <person name="Down T."/>
            <person name="Engstrom P."/>
            <person name="Fagiolini M."/>
            <person name="Faulkner G."/>
            <person name="Fletcher C.F."/>
            <person name="Fukushima T."/>
            <person name="Furuno M."/>
            <person name="Futaki S."/>
            <person name="Gariboldi M."/>
            <person name="Georgii-Hemming P."/>
            <person name="Gingeras T.R."/>
            <person name="Gojobori T."/>
            <person name="Green R.E."/>
            <person name="Gustincich S."/>
            <person name="Harbers M."/>
            <person name="Hayashi Y."/>
            <person name="Hensch T.K."/>
            <person name="Hirokawa N."/>
            <person name="Hill D."/>
            <person name="Huminiecki L."/>
            <person name="Iacono M."/>
            <person name="Ikeo K."/>
            <person name="Iwama A."/>
            <person name="Ishikawa T."/>
            <person name="Jakt M."/>
            <person name="Kanapin A."/>
            <person name="Katoh M."/>
            <person name="Kawasawa Y."/>
            <person name="Kelso J."/>
            <person name="Kitamura H."/>
            <person name="Kitano H."/>
            <person name="Kollias G."/>
            <person name="Krishnan S.P."/>
            <person name="Kruger A."/>
            <person name="Kummerfeld S.K."/>
            <person name="Kurochkin I.V."/>
            <person name="Lareau L.F."/>
            <person name="Lazarevic D."/>
            <person name="Lipovich L."/>
            <person name="Liu J."/>
            <person name="Liuni S."/>
            <person name="McWilliam S."/>
            <person name="Madan Babu M."/>
            <person name="Madera M."/>
            <person name="Marchionni L."/>
            <person name="Matsuda H."/>
            <person name="Matsuzawa S."/>
            <person name="Miki H."/>
            <person name="Mignone F."/>
            <person name="Miyake S."/>
            <person name="Morris K."/>
            <person name="Mottagui-Tabar S."/>
            <person name="Mulder N."/>
            <person name="Nakano N."/>
            <person name="Nakauchi H."/>
            <person name="Ng P."/>
            <person name="Nilsson R."/>
            <person name="Nishiguchi S."/>
            <person name="Nishikawa S."/>
            <person name="Nori F."/>
            <person name="Ohara O."/>
            <person name="Okazaki Y."/>
            <person name="Orlando V."/>
            <person name="Pang K.C."/>
            <person name="Pavan W.J."/>
            <person name="Pavesi G."/>
            <person name="Pesole G."/>
            <person name="Petrovsky N."/>
            <person name="Piazza S."/>
            <person name="Reed J."/>
            <person name="Reid J.F."/>
            <person name="Ring B.Z."/>
            <person name="Ringwald M."/>
            <person name="Rost B."/>
            <person name="Ruan Y."/>
            <person name="Salzberg S.L."/>
            <person name="Sandelin A."/>
            <person name="Schneider C."/>
            <person name="Schoenbach C."/>
            <person name="Sekiguchi K."/>
            <person name="Semple C.A."/>
            <person name="Seno S."/>
            <person name="Sessa L."/>
            <person name="Sheng Y."/>
            <person name="Shibata Y."/>
            <person name="Shimada H."/>
            <person name="Shimada K."/>
            <person name="Silva D."/>
            <person name="Sinclair B."/>
            <person name="Sperling S."/>
            <person name="Stupka E."/>
            <person name="Sugiura K."/>
            <person name="Sultana R."/>
            <person name="Takenaka Y."/>
            <person name="Taki K."/>
            <person name="Tammoja K."/>
            <person name="Tan S.L."/>
            <person name="Tang S."/>
            <person name="Taylor M.S."/>
            <person name="Tegner J."/>
            <person name="Teichmann S.A."/>
            <person name="Ueda H.R."/>
            <person name="van Nimwegen E."/>
            <person name="Verardo R."/>
            <person name="Wei C.L."/>
            <person name="Yagi K."/>
            <person name="Yamanishi H."/>
            <person name="Zabarovsky E."/>
            <person name="Zhu S."/>
            <person name="Zimmer A."/>
            <person name="Hide W."/>
            <person name="Bult C."/>
            <person name="Grimmond S.M."/>
            <person name="Teasdale R.D."/>
            <person name="Liu E.T."/>
            <person name="Brusic V."/>
            <person name="Quackenbush J."/>
            <person name="Wahlestedt C."/>
            <person name="Mattick J.S."/>
            <person name="Hume D.A."/>
            <person name="Kai C."/>
            <person name="Sasaki D."/>
            <person name="Tomaru Y."/>
            <person name="Fukuda S."/>
            <person name="Kanamori-Katayama M."/>
            <person name="Suzuki M."/>
            <person name="Aoki J."/>
            <person name="Arakawa T."/>
            <person name="Iida J."/>
            <person name="Imamura K."/>
            <person name="Itoh M."/>
            <person name="Kato T."/>
            <person name="Kawaji H."/>
            <person name="Kawagashira N."/>
            <person name="Kawashima T."/>
            <person name="Kojima M."/>
            <person name="Kondo S."/>
            <person name="Konno H."/>
            <person name="Nakano K."/>
            <person name="Ninomiya N."/>
            <person name="Nishio T."/>
            <person name="Okada M."/>
            <person name="Plessy C."/>
            <person name="Shibata K."/>
            <person name="Shiraki T."/>
            <person name="Suzuki S."/>
            <person name="Tagami M."/>
            <person name="Waki K."/>
            <person name="Watahiki A."/>
            <person name="Okamura-Oho Y."/>
            <person name="Suzuki H."/>
            <person name="Kawai J."/>
            <person name="Hayashizaki Y."/>
        </authorList>
    </citation>
    <scope>NUCLEOTIDE SEQUENCE [LARGE SCALE MRNA]</scope>
    <source>
        <strain>C57BL/6J</strain>
        <tissue>Tongue</tissue>
    </source>
</reference>
<reference key="2">
    <citation type="journal article" date="2004" name="Genome Res.">
        <title>The status, quality, and expansion of the NIH full-length cDNA project: the Mammalian Gene Collection (MGC).</title>
        <authorList>
            <consortium name="The MGC Project Team"/>
        </authorList>
    </citation>
    <scope>NUCLEOTIDE SEQUENCE [LARGE SCALE MRNA]</scope>
    <source>
        <strain>FVB/N</strain>
        <tissue>Mammary gland</tissue>
    </source>
</reference>
<reference key="3">
    <citation type="journal article" date="2010" name="Cell">
        <title>A tissue-specific atlas of mouse protein phosphorylation and expression.</title>
        <authorList>
            <person name="Huttlin E.L."/>
            <person name="Jedrychowski M.P."/>
            <person name="Elias J.E."/>
            <person name="Goswami T."/>
            <person name="Rad R."/>
            <person name="Beausoleil S.A."/>
            <person name="Villen J."/>
            <person name="Haas W."/>
            <person name="Sowa M.E."/>
            <person name="Gygi S.P."/>
        </authorList>
    </citation>
    <scope>IDENTIFICATION BY MASS SPECTROMETRY [LARGE SCALE ANALYSIS]</scope>
    <source>
        <tissue>Brain</tissue>
        <tissue>Heart</tissue>
        <tissue>Kidney</tissue>
        <tissue>Liver</tissue>
        <tissue>Lung</tissue>
        <tissue>Pancreas</tissue>
        <tissue>Spleen</tissue>
        <tissue>Testis</tissue>
    </source>
</reference>
<proteinExistence type="evidence at protein level"/>
<protein>
    <recommendedName>
        <fullName>N-alpha-acetyltransferase 20</fullName>
        <ecNumber evidence="1">2.3.1.254</ecNumber>
    </recommendedName>
    <alternativeName>
        <fullName>Methionine N-acetyltransferase</fullName>
    </alternativeName>
    <alternativeName>
        <fullName>N-acetyltransferase 5</fullName>
    </alternativeName>
    <alternativeName>
        <fullName>N-terminal acetyltransferase B complex catalytic subunit NAA20</fullName>
    </alternativeName>
    <alternativeName>
        <fullName>N-terminal acetyltransferase B complex catalytic subunit NAT5</fullName>
        <shortName>NatB complex subunit NAT5</shortName>
    </alternativeName>
    <alternativeName>
        <fullName>NatB catalytic subunit</fullName>
    </alternativeName>
</protein>
<gene>
    <name type="primary">Naa20</name>
    <name type="synonym">Nat5</name>
</gene>
<keyword id="KW-0012">Acyltransferase</keyword>
<keyword id="KW-0963">Cytoplasm</keyword>
<keyword id="KW-0539">Nucleus</keyword>
<keyword id="KW-1185">Reference proteome</keyword>
<keyword id="KW-0808">Transferase</keyword>
<accession>P61600</accession>
<accession>Q14B28</accession>
<accession>Q4VAC3</accession>
<accession>Q9D7H8</accession>
<accession>Q9H0Y4</accession>
<accession>Q9NQH6</accession>
<accession>Q9Y6D2</accession>
<comment type="function">
    <text evidence="1">Catalytic subunit of the NatB complex which catalyzes acetylation of the N-terminal methionine residues of peptides beginning with Met-Asp, Met-Glu, Met-Asn and Met-Gln. Proteins with cell cycle functions are overrepresented in the pool of NatB substrates. Required for maintaining the structure and function of actomyosin fibers and for proper cellular migration.</text>
</comment>
<comment type="catalytic activity">
    <reaction evidence="1">
        <text>N-terminal L-methionyl-L-asparaginyl-[protein] + acetyl-CoA = N-terminal N(alpha)-acetyl-L-methionyl-L-asparaginyl-[protein] + CoA + H(+)</text>
        <dbReference type="Rhea" id="RHEA:50484"/>
        <dbReference type="Rhea" id="RHEA-COMP:12694"/>
        <dbReference type="Rhea" id="RHEA-COMP:12695"/>
        <dbReference type="ChEBI" id="CHEBI:15378"/>
        <dbReference type="ChEBI" id="CHEBI:57287"/>
        <dbReference type="ChEBI" id="CHEBI:57288"/>
        <dbReference type="ChEBI" id="CHEBI:133356"/>
        <dbReference type="ChEBI" id="CHEBI:133358"/>
        <dbReference type="EC" id="2.3.1.254"/>
    </reaction>
</comment>
<comment type="catalytic activity">
    <reaction evidence="1">
        <text>N-terminal L-methionyl-L-glutaminyl-[protein] + acetyl-CoA = N-terminal N(alpha)-acetyl-L-methionyl-L-glutaminyl-[protein] + CoA + H(+)</text>
        <dbReference type="Rhea" id="RHEA:50492"/>
        <dbReference type="Rhea" id="RHEA-COMP:12698"/>
        <dbReference type="Rhea" id="RHEA-COMP:12699"/>
        <dbReference type="ChEBI" id="CHEBI:15378"/>
        <dbReference type="ChEBI" id="CHEBI:57287"/>
        <dbReference type="ChEBI" id="CHEBI:57288"/>
        <dbReference type="ChEBI" id="CHEBI:133361"/>
        <dbReference type="ChEBI" id="CHEBI:133362"/>
        <dbReference type="EC" id="2.3.1.254"/>
    </reaction>
</comment>
<comment type="catalytic activity">
    <reaction evidence="1">
        <text>N-terminal L-methionyl-L-aspartyl-[protein] + acetyl-CoA = N-terminal N(alpha)-acetyl-L-methionyl-L-aspartyl-[protein] + CoA + H(+)</text>
        <dbReference type="Rhea" id="RHEA:50480"/>
        <dbReference type="Rhea" id="RHEA-COMP:12692"/>
        <dbReference type="Rhea" id="RHEA-COMP:12693"/>
        <dbReference type="ChEBI" id="CHEBI:15378"/>
        <dbReference type="ChEBI" id="CHEBI:57287"/>
        <dbReference type="ChEBI" id="CHEBI:57288"/>
        <dbReference type="ChEBI" id="CHEBI:133045"/>
        <dbReference type="ChEBI" id="CHEBI:133063"/>
        <dbReference type="EC" id="2.3.1.254"/>
    </reaction>
</comment>
<comment type="catalytic activity">
    <reaction evidence="1">
        <text>N-terminal L-methionyl-L-glutamyl-[protein] + acetyl-CoA = N-terminal N(alpha)-acetyl-L-methionyl-L-glutamyl-[protein] + CoA + H(+)</text>
        <dbReference type="Rhea" id="RHEA:50488"/>
        <dbReference type="Rhea" id="RHEA-COMP:12696"/>
        <dbReference type="Rhea" id="RHEA-COMP:12697"/>
        <dbReference type="ChEBI" id="CHEBI:15378"/>
        <dbReference type="ChEBI" id="CHEBI:57287"/>
        <dbReference type="ChEBI" id="CHEBI:57288"/>
        <dbReference type="ChEBI" id="CHEBI:133359"/>
        <dbReference type="ChEBI" id="CHEBI:133360"/>
        <dbReference type="EC" id="2.3.1.254"/>
    </reaction>
</comment>
<comment type="subunit">
    <text evidence="1">Component of the N-terminal acetyltransferase B (NatB) complex which is composed of NAA20 and NAA25.</text>
</comment>
<comment type="subcellular location">
    <subcellularLocation>
        <location evidence="1">Cytoplasm</location>
    </subcellularLocation>
    <subcellularLocation>
        <location evidence="1">Nucleus</location>
    </subcellularLocation>
</comment>
<comment type="similarity">
    <text evidence="3">Belongs to the acetyltransferase family. ARD1 subfamily.</text>
</comment>
<dbReference type="EC" id="2.3.1.254" evidence="1"/>
<dbReference type="EMBL" id="AK009229">
    <property type="protein sequence ID" value="BAB26152.1"/>
    <property type="molecule type" value="mRNA"/>
</dbReference>
<dbReference type="EMBL" id="BC009157">
    <property type="protein sequence ID" value="AAH09157.1"/>
    <property type="molecule type" value="mRNA"/>
</dbReference>
<dbReference type="EMBL" id="BC096451">
    <property type="protein sequence ID" value="AAH96451.1"/>
    <property type="molecule type" value="mRNA"/>
</dbReference>
<dbReference type="EMBL" id="BC116374">
    <property type="protein sequence ID" value="AAI16375.1"/>
    <property type="molecule type" value="mRNA"/>
</dbReference>
<dbReference type="CCDS" id="CCDS50735.1"/>
<dbReference type="RefSeq" id="NP_001135437.1">
    <property type="nucleotide sequence ID" value="NM_001141965.2"/>
</dbReference>
<dbReference type="RefSeq" id="NP_080701.1">
    <property type="nucleotide sequence ID" value="NM_026425.3"/>
</dbReference>
<dbReference type="SMR" id="P61600"/>
<dbReference type="BioGRID" id="212503">
    <property type="interactions" value="8"/>
</dbReference>
<dbReference type="FunCoup" id="P61600">
    <property type="interactions" value="3497"/>
</dbReference>
<dbReference type="STRING" id="10090.ENSMUSP00000002805"/>
<dbReference type="GlyGen" id="P61600">
    <property type="glycosylation" value="1 site, 1 N-linked glycan (1 site)"/>
</dbReference>
<dbReference type="iPTMnet" id="P61600"/>
<dbReference type="PhosphoSitePlus" id="P61600"/>
<dbReference type="PaxDb" id="10090-ENSMUSP00000002805"/>
<dbReference type="PeptideAtlas" id="P61600"/>
<dbReference type="ProteomicsDB" id="286136"/>
<dbReference type="Pumba" id="P61600"/>
<dbReference type="Antibodypedia" id="24668">
    <property type="antibodies" value="140 antibodies from 26 providers"/>
</dbReference>
<dbReference type="DNASU" id="67877"/>
<dbReference type="Ensembl" id="ENSMUST00000110000.8">
    <property type="protein sequence ID" value="ENSMUSP00000105627.2"/>
    <property type="gene ID" value="ENSMUSG00000002728.15"/>
</dbReference>
<dbReference type="GeneID" id="67877"/>
<dbReference type="KEGG" id="mmu:67877"/>
<dbReference type="UCSC" id="uc008mry.2">
    <property type="organism name" value="mouse"/>
</dbReference>
<dbReference type="AGR" id="MGI:1915127"/>
<dbReference type="CTD" id="51126"/>
<dbReference type="MGI" id="MGI:1915127">
    <property type="gene designation" value="Naa20"/>
</dbReference>
<dbReference type="VEuPathDB" id="HostDB:ENSMUSG00000002728"/>
<dbReference type="eggNOG" id="KOG3234">
    <property type="taxonomic scope" value="Eukaryota"/>
</dbReference>
<dbReference type="GeneTree" id="ENSGT00550000075046"/>
<dbReference type="InParanoid" id="P61600"/>
<dbReference type="OMA" id="EQHPSMR"/>
<dbReference type="OrthoDB" id="10264728at2759"/>
<dbReference type="BRENDA" id="2.3.1.254">
    <property type="organism ID" value="3474"/>
</dbReference>
<dbReference type="BioGRID-ORCS" id="67877">
    <property type="hits" value="30 hits in 82 CRISPR screens"/>
</dbReference>
<dbReference type="ChiTaRS" id="Naa20">
    <property type="organism name" value="mouse"/>
</dbReference>
<dbReference type="PRO" id="PR:P61600"/>
<dbReference type="Proteomes" id="UP000000589">
    <property type="component" value="Chromosome 2"/>
</dbReference>
<dbReference type="RNAct" id="P61600">
    <property type="molecule type" value="protein"/>
</dbReference>
<dbReference type="Bgee" id="ENSMUSG00000002728">
    <property type="expression patterns" value="Expressed in embryonic facial prominence and 68 other cell types or tissues"/>
</dbReference>
<dbReference type="ExpressionAtlas" id="P61600">
    <property type="expression patterns" value="baseline and differential"/>
</dbReference>
<dbReference type="GO" id="GO:0005737">
    <property type="term" value="C:cytoplasm"/>
    <property type="evidence" value="ECO:0000250"/>
    <property type="project" value="UniProtKB"/>
</dbReference>
<dbReference type="GO" id="GO:0005829">
    <property type="term" value="C:cytosol"/>
    <property type="evidence" value="ECO:0007669"/>
    <property type="project" value="Ensembl"/>
</dbReference>
<dbReference type="GO" id="GO:0031416">
    <property type="term" value="C:NatB complex"/>
    <property type="evidence" value="ECO:0007669"/>
    <property type="project" value="Ensembl"/>
</dbReference>
<dbReference type="GO" id="GO:0005634">
    <property type="term" value="C:nucleus"/>
    <property type="evidence" value="ECO:0000250"/>
    <property type="project" value="UniProtKB"/>
</dbReference>
<dbReference type="GO" id="GO:0120518">
    <property type="term" value="F:protein N-terminal-methionine acetyltransferase activity"/>
    <property type="evidence" value="ECO:0007669"/>
    <property type="project" value="UniProtKB-EC"/>
</dbReference>
<dbReference type="GO" id="GO:0017190">
    <property type="term" value="P:N-terminal peptidyl-aspartic acid acetylation"/>
    <property type="evidence" value="ECO:0000250"/>
    <property type="project" value="UniProtKB"/>
</dbReference>
<dbReference type="GO" id="GO:0018002">
    <property type="term" value="P:N-terminal peptidyl-glutamic acid acetylation"/>
    <property type="evidence" value="ECO:0000250"/>
    <property type="project" value="UniProtKB"/>
</dbReference>
<dbReference type="GO" id="GO:0017192">
    <property type="term" value="P:N-terminal peptidyl-glutamine acetylation"/>
    <property type="evidence" value="ECO:0000250"/>
    <property type="project" value="UniProtKB"/>
</dbReference>
<dbReference type="GO" id="GO:0006474">
    <property type="term" value="P:N-terminal protein amino acid acetylation"/>
    <property type="evidence" value="ECO:0000250"/>
    <property type="project" value="UniProtKB"/>
</dbReference>
<dbReference type="CDD" id="cd04301">
    <property type="entry name" value="NAT_SF"/>
    <property type="match status" value="1"/>
</dbReference>
<dbReference type="FunFam" id="3.40.630.30:FF:000015">
    <property type="entry name" value="N-alpha-acetyltransferase 20 isoform X1"/>
    <property type="match status" value="1"/>
</dbReference>
<dbReference type="Gene3D" id="3.40.630.30">
    <property type="match status" value="1"/>
</dbReference>
<dbReference type="InterPro" id="IPR016181">
    <property type="entry name" value="Acyl_CoA_acyltransferase"/>
</dbReference>
<dbReference type="InterPro" id="IPR000182">
    <property type="entry name" value="GNAT_dom"/>
</dbReference>
<dbReference type="InterPro" id="IPR051646">
    <property type="entry name" value="NatB_acetyltransferase_subunit"/>
</dbReference>
<dbReference type="PANTHER" id="PTHR45910">
    <property type="entry name" value="N-ALPHA-ACETYLTRANSFERASE 20"/>
    <property type="match status" value="1"/>
</dbReference>
<dbReference type="PANTHER" id="PTHR45910:SF1">
    <property type="entry name" value="N-ALPHA-ACETYLTRANSFERASE 20"/>
    <property type="match status" value="1"/>
</dbReference>
<dbReference type="Pfam" id="PF00583">
    <property type="entry name" value="Acetyltransf_1"/>
    <property type="match status" value="1"/>
</dbReference>
<dbReference type="SUPFAM" id="SSF55729">
    <property type="entry name" value="Acyl-CoA N-acyltransferases (Nat)"/>
    <property type="match status" value="1"/>
</dbReference>
<dbReference type="PROSITE" id="PS51186">
    <property type="entry name" value="GNAT"/>
    <property type="match status" value="1"/>
</dbReference>
<name>NAA20_MOUSE</name>